<feature type="chain" id="PRO_0000167426" description="Ribosome-recycling factor">
    <location>
        <begin position="1"/>
        <end position="186"/>
    </location>
</feature>
<accession>P94340</accession>
<evidence type="ECO:0000255" key="1">
    <source>
        <dbReference type="HAMAP-Rule" id="MF_00040"/>
    </source>
</evidence>
<dbReference type="EMBL" id="U53133">
    <property type="protein sequence ID" value="AAB19043.1"/>
    <property type="molecule type" value="Genomic_DNA"/>
</dbReference>
<dbReference type="EMBL" id="AE008917">
    <property type="protein sequence ID" value="AAL52007.1"/>
    <property type="molecule type" value="Genomic_DNA"/>
</dbReference>
<dbReference type="PIR" id="AD3355">
    <property type="entry name" value="AD3355"/>
</dbReference>
<dbReference type="RefSeq" id="WP_004683873.1">
    <property type="nucleotide sequence ID" value="NZ_GG703780.1"/>
</dbReference>
<dbReference type="SMR" id="P94340"/>
<dbReference type="GeneID" id="29593640"/>
<dbReference type="KEGG" id="bme:BMEI0826"/>
<dbReference type="KEGG" id="bmel:DK63_594"/>
<dbReference type="PATRIC" id="fig|224914.52.peg.619"/>
<dbReference type="eggNOG" id="COG0233">
    <property type="taxonomic scope" value="Bacteria"/>
</dbReference>
<dbReference type="PhylomeDB" id="P94340"/>
<dbReference type="Proteomes" id="UP000000419">
    <property type="component" value="Chromosome I"/>
</dbReference>
<dbReference type="GO" id="GO:0005829">
    <property type="term" value="C:cytosol"/>
    <property type="evidence" value="ECO:0007669"/>
    <property type="project" value="GOC"/>
</dbReference>
<dbReference type="GO" id="GO:0043023">
    <property type="term" value="F:ribosomal large subunit binding"/>
    <property type="evidence" value="ECO:0007669"/>
    <property type="project" value="TreeGrafter"/>
</dbReference>
<dbReference type="GO" id="GO:0002184">
    <property type="term" value="P:cytoplasmic translational termination"/>
    <property type="evidence" value="ECO:0007669"/>
    <property type="project" value="TreeGrafter"/>
</dbReference>
<dbReference type="CDD" id="cd00520">
    <property type="entry name" value="RRF"/>
    <property type="match status" value="1"/>
</dbReference>
<dbReference type="FunFam" id="1.10.132.20:FF:000001">
    <property type="entry name" value="Ribosome-recycling factor"/>
    <property type="match status" value="1"/>
</dbReference>
<dbReference type="FunFam" id="3.30.1360.40:FF:000001">
    <property type="entry name" value="Ribosome-recycling factor"/>
    <property type="match status" value="1"/>
</dbReference>
<dbReference type="Gene3D" id="3.30.1360.40">
    <property type="match status" value="1"/>
</dbReference>
<dbReference type="Gene3D" id="1.10.132.20">
    <property type="entry name" value="Ribosome-recycling factor"/>
    <property type="match status" value="1"/>
</dbReference>
<dbReference type="HAMAP" id="MF_00040">
    <property type="entry name" value="RRF"/>
    <property type="match status" value="1"/>
</dbReference>
<dbReference type="InterPro" id="IPR002661">
    <property type="entry name" value="Ribosome_recyc_fac"/>
</dbReference>
<dbReference type="InterPro" id="IPR023584">
    <property type="entry name" value="Ribosome_recyc_fac_dom"/>
</dbReference>
<dbReference type="InterPro" id="IPR036191">
    <property type="entry name" value="RRF_sf"/>
</dbReference>
<dbReference type="NCBIfam" id="TIGR00496">
    <property type="entry name" value="frr"/>
    <property type="match status" value="1"/>
</dbReference>
<dbReference type="PANTHER" id="PTHR20982:SF3">
    <property type="entry name" value="MITOCHONDRIAL RIBOSOME RECYCLING FACTOR PSEUDO 1"/>
    <property type="match status" value="1"/>
</dbReference>
<dbReference type="PANTHER" id="PTHR20982">
    <property type="entry name" value="RIBOSOME RECYCLING FACTOR"/>
    <property type="match status" value="1"/>
</dbReference>
<dbReference type="Pfam" id="PF01765">
    <property type="entry name" value="RRF"/>
    <property type="match status" value="1"/>
</dbReference>
<dbReference type="SUPFAM" id="SSF55194">
    <property type="entry name" value="Ribosome recycling factor, RRF"/>
    <property type="match status" value="1"/>
</dbReference>
<reference key="1">
    <citation type="journal article" date="1996" name="Infect. Immun.">
        <title>Cloning, nucleotide sequence, and expression of the gene coding for a ribosome releasing factor-homologous protein of Brucella melitensis.</title>
        <authorList>
            <person name="Vizcaino N."/>
            <person name="Cloeckaert A."/>
            <person name="Dubray G."/>
            <person name="Zygmunt M.S."/>
        </authorList>
    </citation>
    <scope>NUCLEOTIDE SEQUENCE [GENOMIC DNA]</scope>
    <source>
        <strain>ATCC 23456 / CCUG 17765 / NCTC 10094 / 16M</strain>
    </source>
</reference>
<reference key="2">
    <citation type="journal article" date="2002" name="Proc. Natl. Acad. Sci. U.S.A.">
        <title>The genome sequence of the facultative intracellular pathogen Brucella melitensis.</title>
        <authorList>
            <person name="DelVecchio V.G."/>
            <person name="Kapatral V."/>
            <person name="Redkar R.J."/>
            <person name="Patra G."/>
            <person name="Mujer C."/>
            <person name="Los T."/>
            <person name="Ivanova N."/>
            <person name="Anderson I."/>
            <person name="Bhattacharyya A."/>
            <person name="Lykidis A."/>
            <person name="Reznik G."/>
            <person name="Jablonski L."/>
            <person name="Larsen N."/>
            <person name="D'Souza M."/>
            <person name="Bernal A."/>
            <person name="Mazur M."/>
            <person name="Goltsman E."/>
            <person name="Selkov E."/>
            <person name="Elzer P.H."/>
            <person name="Hagius S."/>
            <person name="O'Callaghan D."/>
            <person name="Letesson J.-J."/>
            <person name="Haselkorn R."/>
            <person name="Kyrpides N.C."/>
            <person name="Overbeek R."/>
        </authorList>
    </citation>
    <scope>NUCLEOTIDE SEQUENCE [LARGE SCALE GENOMIC DNA]</scope>
    <source>
        <strain>ATCC 23456 / CCUG 17765 / NCTC 10094 / 16M</strain>
    </source>
</reference>
<organism>
    <name type="scientific">Brucella melitensis biotype 1 (strain ATCC 23456 / CCUG 17765 / NCTC 10094 / 16M)</name>
    <dbReference type="NCBI Taxonomy" id="224914"/>
    <lineage>
        <taxon>Bacteria</taxon>
        <taxon>Pseudomonadati</taxon>
        <taxon>Pseudomonadota</taxon>
        <taxon>Alphaproteobacteria</taxon>
        <taxon>Hyphomicrobiales</taxon>
        <taxon>Brucellaceae</taxon>
        <taxon>Brucella/Ochrobactrum group</taxon>
        <taxon>Brucella</taxon>
    </lineage>
</organism>
<sequence>MSDAFDINDLKRRMEGAVNALKHDLGGLRTGRASASLLEPITIEAYGSTMPINQVANISVPESRMLSVSVWDKSMVGAVERAIRDSGLGLNPITDGMTLRIRLPELNEQRRKELVKIAHQYAEQGRIAARHVRRDGMDQLKKLEKDSVISQDESRVLSEKVQKLTDDTIAEMDKIVAVKEGEIMQV</sequence>
<protein>
    <recommendedName>
        <fullName evidence="1">Ribosome-recycling factor</fullName>
        <shortName evidence="1">RRF</shortName>
    </recommendedName>
    <alternativeName>
        <fullName>CP24</fullName>
    </alternativeName>
    <alternativeName>
        <fullName evidence="1">Ribosome-releasing factor</fullName>
    </alternativeName>
</protein>
<gene>
    <name evidence="1" type="primary">frr</name>
    <name type="synonym">cp24</name>
    <name type="ordered locus">BMEI0826</name>
</gene>
<comment type="function">
    <text evidence="1">Responsible for the release of ribosomes from messenger RNA at the termination of protein biosynthesis. May increase the efficiency of translation by recycling ribosomes from one round of translation to another.</text>
</comment>
<comment type="subcellular location">
    <subcellularLocation>
        <location evidence="1">Cytoplasm</location>
    </subcellularLocation>
</comment>
<comment type="similarity">
    <text evidence="1">Belongs to the RRF family.</text>
</comment>
<keyword id="KW-0963">Cytoplasm</keyword>
<keyword id="KW-0648">Protein biosynthesis</keyword>
<proteinExistence type="inferred from homology"/>
<name>RRF_BRUME</name>